<sequence>MPLLLLLPLLWAGALAMDPNFWLQVQESVTVQEGLCVLVPCTFFHPIPYYDKNSPVHGYWFREGAIISRDSPVATNKLDQEVQEETQGRFRLLGDPSRNNCSLSIVDARRRDNGSYFFRMERGSTKYSYKSPQLSVHVTDLTHRPKILIPGTLEPGHSKNLTCSVSWACEQGTPPIFSWLSAAPTSLGPRTTHSSVLIITPRPQDHGTNLTCQVKFAGAGVTTERTIQLNVTYVPQNPTTGIFPGDGSGKQETRAGVVHGAIGGAGVTALLALCLCLIFFIVKTHRRKAARTAVGRNDTHPTTGSASPKHQKKSKLHGPTETSSCSGAAPTVEMDEELHYASLNFHGMNPSKDTSTEYSEVRTQ</sequence>
<gene>
    <name type="primary">CD33</name>
    <name type="synonym">SIGLEC3</name>
</gene>
<reference key="1">
    <citation type="journal article" date="1988" name="J. Immunol.">
        <title>Isolation of a cDNA encoding CD33, a differentiation antigen of myeloid progenitor cells.</title>
        <authorList>
            <person name="Simmons D."/>
            <person name="Seed B."/>
        </authorList>
    </citation>
    <scope>NUCLEOTIDE SEQUENCE [MRNA] (ISOFORM CD33M)</scope>
    <scope>VARIANT GLY-69</scope>
    <source>
        <tissue>Premonocytic lymphoma</tissue>
    </source>
</reference>
<reference key="2">
    <citation type="journal article" date="2002" name="Gene">
        <title>Genomic organization of the siglec gene locus on chromosome 19q13.4 and cloning of two new siglec pseudogenes.</title>
        <authorList>
            <person name="Yousef G.M."/>
            <person name="Ordon M.H."/>
            <person name="Foussias G."/>
            <person name="Diamandis E.P."/>
        </authorList>
    </citation>
    <scope>NUCLEOTIDE SEQUENCE [GENOMIC DNA]</scope>
</reference>
<reference key="3">
    <citation type="journal article" date="2006" name="J. Leukoc. Biol.">
        <title>A study of CD33 (SIGLEC-3) antigen expression and function on activated human T and NK cells: two isoforms of CD33 are generated by alternative splicing.</title>
        <authorList>
            <person name="Hernandez-Caselles T."/>
            <person name="Martinez-Esparza M."/>
            <person name="Perez-Oliva A.B."/>
            <person name="Quintanilla-Cecconi A.M."/>
            <person name="Garcia-Alonso A."/>
            <person name="Alvarez-Lopez D.M."/>
            <person name="Garcia-Penarrubia P."/>
        </authorList>
    </citation>
    <scope>NUCLEOTIDE SEQUENCE [MRNA] (ISOFORM CD33M)</scope>
    <scope>ALTERNATIVE SPLICING</scope>
</reference>
<reference key="4">
    <citation type="journal article" date="2004" name="Nat. Genet.">
        <title>Complete sequencing and characterization of 21,243 full-length human cDNAs.</title>
        <authorList>
            <person name="Ota T."/>
            <person name="Suzuki Y."/>
            <person name="Nishikawa T."/>
            <person name="Otsuki T."/>
            <person name="Sugiyama T."/>
            <person name="Irie R."/>
            <person name="Wakamatsu A."/>
            <person name="Hayashi K."/>
            <person name="Sato H."/>
            <person name="Nagai K."/>
            <person name="Kimura K."/>
            <person name="Makita H."/>
            <person name="Sekine M."/>
            <person name="Obayashi M."/>
            <person name="Nishi T."/>
            <person name="Shibahara T."/>
            <person name="Tanaka T."/>
            <person name="Ishii S."/>
            <person name="Yamamoto J."/>
            <person name="Saito K."/>
            <person name="Kawai Y."/>
            <person name="Isono Y."/>
            <person name="Nakamura Y."/>
            <person name="Nagahari K."/>
            <person name="Murakami K."/>
            <person name="Yasuda T."/>
            <person name="Iwayanagi T."/>
            <person name="Wagatsuma M."/>
            <person name="Shiratori A."/>
            <person name="Sudo H."/>
            <person name="Hosoiri T."/>
            <person name="Kaku Y."/>
            <person name="Kodaira H."/>
            <person name="Kondo H."/>
            <person name="Sugawara M."/>
            <person name="Takahashi M."/>
            <person name="Kanda K."/>
            <person name="Yokoi T."/>
            <person name="Furuya T."/>
            <person name="Kikkawa E."/>
            <person name="Omura Y."/>
            <person name="Abe K."/>
            <person name="Kamihara K."/>
            <person name="Katsuta N."/>
            <person name="Sato K."/>
            <person name="Tanikawa M."/>
            <person name="Yamazaki M."/>
            <person name="Ninomiya K."/>
            <person name="Ishibashi T."/>
            <person name="Yamashita H."/>
            <person name="Murakawa K."/>
            <person name="Fujimori K."/>
            <person name="Tanai H."/>
            <person name="Kimata M."/>
            <person name="Watanabe M."/>
            <person name="Hiraoka S."/>
            <person name="Chiba Y."/>
            <person name="Ishida S."/>
            <person name="Ono Y."/>
            <person name="Takiguchi S."/>
            <person name="Watanabe S."/>
            <person name="Yosida M."/>
            <person name="Hotuta T."/>
            <person name="Kusano J."/>
            <person name="Kanehori K."/>
            <person name="Takahashi-Fujii A."/>
            <person name="Hara H."/>
            <person name="Tanase T.-O."/>
            <person name="Nomura Y."/>
            <person name="Togiya S."/>
            <person name="Komai F."/>
            <person name="Hara R."/>
            <person name="Takeuchi K."/>
            <person name="Arita M."/>
            <person name="Imose N."/>
            <person name="Musashino K."/>
            <person name="Yuuki H."/>
            <person name="Oshima A."/>
            <person name="Sasaki N."/>
            <person name="Aotsuka S."/>
            <person name="Yoshikawa Y."/>
            <person name="Matsunawa H."/>
            <person name="Ichihara T."/>
            <person name="Shiohata N."/>
            <person name="Sano S."/>
            <person name="Moriya S."/>
            <person name="Momiyama H."/>
            <person name="Satoh N."/>
            <person name="Takami S."/>
            <person name="Terashima Y."/>
            <person name="Suzuki O."/>
            <person name="Nakagawa S."/>
            <person name="Senoh A."/>
            <person name="Mizoguchi H."/>
            <person name="Goto Y."/>
            <person name="Shimizu F."/>
            <person name="Wakebe H."/>
            <person name="Hishigaki H."/>
            <person name="Watanabe T."/>
            <person name="Sugiyama A."/>
            <person name="Takemoto M."/>
            <person name="Kawakami B."/>
            <person name="Yamazaki M."/>
            <person name="Watanabe K."/>
            <person name="Kumagai A."/>
            <person name="Itakura S."/>
            <person name="Fukuzumi Y."/>
            <person name="Fujimori Y."/>
            <person name="Komiyama M."/>
            <person name="Tashiro H."/>
            <person name="Tanigami A."/>
            <person name="Fujiwara T."/>
            <person name="Ono T."/>
            <person name="Yamada K."/>
            <person name="Fujii Y."/>
            <person name="Ozaki K."/>
            <person name="Hirao M."/>
            <person name="Ohmori Y."/>
            <person name="Kawabata A."/>
            <person name="Hikiji T."/>
            <person name="Kobatake N."/>
            <person name="Inagaki H."/>
            <person name="Ikema Y."/>
            <person name="Okamoto S."/>
            <person name="Okitani R."/>
            <person name="Kawakami T."/>
            <person name="Noguchi S."/>
            <person name="Itoh T."/>
            <person name="Shigeta K."/>
            <person name="Senba T."/>
            <person name="Matsumura K."/>
            <person name="Nakajima Y."/>
            <person name="Mizuno T."/>
            <person name="Morinaga M."/>
            <person name="Sasaki M."/>
            <person name="Togashi T."/>
            <person name="Oyama M."/>
            <person name="Hata H."/>
            <person name="Watanabe M."/>
            <person name="Komatsu T."/>
            <person name="Mizushima-Sugano J."/>
            <person name="Satoh T."/>
            <person name="Shirai Y."/>
            <person name="Takahashi Y."/>
            <person name="Nakagawa K."/>
            <person name="Okumura K."/>
            <person name="Nagase T."/>
            <person name="Nomura N."/>
            <person name="Kikuchi H."/>
            <person name="Masuho Y."/>
            <person name="Yamashita R."/>
            <person name="Nakai K."/>
            <person name="Yada T."/>
            <person name="Nakamura Y."/>
            <person name="Ohara O."/>
            <person name="Isogai T."/>
            <person name="Sugano S."/>
        </authorList>
    </citation>
    <scope>NUCLEOTIDE SEQUENCE [LARGE SCALE MRNA] (ISOFORM 3)</scope>
    <scope>VARIANTS VAL-14 AND ARG-304</scope>
    <source>
        <tissue>Uterus</tissue>
    </source>
</reference>
<reference key="5">
    <citation type="journal article" date="2004" name="Nature">
        <title>The DNA sequence and biology of human chromosome 19.</title>
        <authorList>
            <person name="Grimwood J."/>
            <person name="Gordon L.A."/>
            <person name="Olsen A.S."/>
            <person name="Terry A."/>
            <person name="Schmutz J."/>
            <person name="Lamerdin J.E."/>
            <person name="Hellsten U."/>
            <person name="Goodstein D."/>
            <person name="Couronne O."/>
            <person name="Tran-Gyamfi M."/>
            <person name="Aerts A."/>
            <person name="Altherr M."/>
            <person name="Ashworth L."/>
            <person name="Bajorek E."/>
            <person name="Black S."/>
            <person name="Branscomb E."/>
            <person name="Caenepeel S."/>
            <person name="Carrano A.V."/>
            <person name="Caoile C."/>
            <person name="Chan Y.M."/>
            <person name="Christensen M."/>
            <person name="Cleland C.A."/>
            <person name="Copeland A."/>
            <person name="Dalin E."/>
            <person name="Dehal P."/>
            <person name="Denys M."/>
            <person name="Detter J.C."/>
            <person name="Escobar J."/>
            <person name="Flowers D."/>
            <person name="Fotopulos D."/>
            <person name="Garcia C."/>
            <person name="Georgescu A.M."/>
            <person name="Glavina T."/>
            <person name="Gomez M."/>
            <person name="Gonzales E."/>
            <person name="Groza M."/>
            <person name="Hammon N."/>
            <person name="Hawkins T."/>
            <person name="Haydu L."/>
            <person name="Ho I."/>
            <person name="Huang W."/>
            <person name="Israni S."/>
            <person name="Jett J."/>
            <person name="Kadner K."/>
            <person name="Kimball H."/>
            <person name="Kobayashi A."/>
            <person name="Larionov V."/>
            <person name="Leem S.-H."/>
            <person name="Lopez F."/>
            <person name="Lou Y."/>
            <person name="Lowry S."/>
            <person name="Malfatti S."/>
            <person name="Martinez D."/>
            <person name="McCready P.M."/>
            <person name="Medina C."/>
            <person name="Morgan J."/>
            <person name="Nelson K."/>
            <person name="Nolan M."/>
            <person name="Ovcharenko I."/>
            <person name="Pitluck S."/>
            <person name="Pollard M."/>
            <person name="Popkie A.P."/>
            <person name="Predki P."/>
            <person name="Quan G."/>
            <person name="Ramirez L."/>
            <person name="Rash S."/>
            <person name="Retterer J."/>
            <person name="Rodriguez A."/>
            <person name="Rogers S."/>
            <person name="Salamov A."/>
            <person name="Salazar A."/>
            <person name="She X."/>
            <person name="Smith D."/>
            <person name="Slezak T."/>
            <person name="Solovyev V."/>
            <person name="Thayer N."/>
            <person name="Tice H."/>
            <person name="Tsai M."/>
            <person name="Ustaszewska A."/>
            <person name="Vo N."/>
            <person name="Wagner M."/>
            <person name="Wheeler J."/>
            <person name="Wu K."/>
            <person name="Xie G."/>
            <person name="Yang J."/>
            <person name="Dubchak I."/>
            <person name="Furey T.S."/>
            <person name="DeJong P."/>
            <person name="Dickson M."/>
            <person name="Gordon D."/>
            <person name="Eichler E.E."/>
            <person name="Pennacchio L.A."/>
            <person name="Richardson P."/>
            <person name="Stubbs L."/>
            <person name="Rokhsar D.S."/>
            <person name="Myers R.M."/>
            <person name="Rubin E.M."/>
            <person name="Lucas S.M."/>
        </authorList>
    </citation>
    <scope>NUCLEOTIDE SEQUENCE [LARGE SCALE GENOMIC DNA]</scope>
</reference>
<reference key="6">
    <citation type="submission" date="2005-07" db="EMBL/GenBank/DDBJ databases">
        <authorList>
            <person name="Mural R.J."/>
            <person name="Istrail S."/>
            <person name="Sutton G."/>
            <person name="Florea L."/>
            <person name="Halpern A.L."/>
            <person name="Mobarry C.M."/>
            <person name="Lippert R."/>
            <person name="Walenz B."/>
            <person name="Shatkay H."/>
            <person name="Dew I."/>
            <person name="Miller J.R."/>
            <person name="Flanigan M.J."/>
            <person name="Edwards N.J."/>
            <person name="Bolanos R."/>
            <person name="Fasulo D."/>
            <person name="Halldorsson B.V."/>
            <person name="Hannenhalli S."/>
            <person name="Turner R."/>
            <person name="Yooseph S."/>
            <person name="Lu F."/>
            <person name="Nusskern D.R."/>
            <person name="Shue B.C."/>
            <person name="Zheng X.H."/>
            <person name="Zhong F."/>
            <person name="Delcher A.L."/>
            <person name="Huson D.H."/>
            <person name="Kravitz S.A."/>
            <person name="Mouchard L."/>
            <person name="Reinert K."/>
            <person name="Remington K.A."/>
            <person name="Clark A.G."/>
            <person name="Waterman M.S."/>
            <person name="Eichler E.E."/>
            <person name="Adams M.D."/>
            <person name="Hunkapiller M.W."/>
            <person name="Myers E.W."/>
            <person name="Venter J.C."/>
        </authorList>
    </citation>
    <scope>NUCLEOTIDE SEQUENCE [LARGE SCALE GENOMIC DNA]</scope>
</reference>
<reference key="7">
    <citation type="journal article" date="2004" name="Genome Res.">
        <title>The status, quality, and expansion of the NIH full-length cDNA project: the Mammalian Gene Collection (MGC).</title>
        <authorList>
            <consortium name="The MGC Project Team"/>
        </authorList>
    </citation>
    <scope>NUCLEOTIDE SEQUENCE [LARGE SCALE MRNA] (ISOFORM CD33M)</scope>
    <scope>VARIANT GLY-69</scope>
    <source>
        <tissue>Leukocyte</tissue>
    </source>
</reference>
<reference key="8">
    <citation type="journal article" date="1995" name="Blood">
        <title>Characterization of CD33 as a new member of the sialoadhesin family of cellular interaction molecules.</title>
        <authorList>
            <person name="Freeman S.D."/>
            <person name="Kelm S."/>
            <person name="Barber E.K."/>
            <person name="Crocker P.R."/>
        </authorList>
    </citation>
    <scope>FUNCTION</scope>
    <scope>SIALIC ACID-BINDING</scope>
</reference>
<reference key="9">
    <citation type="journal article" date="1996" name="J. Biol. Chem.">
        <title>A single N-linked glycosylation site is implicated in the regulation of ligand recognition by the I-type lectins CD22 and CD33.</title>
        <authorList>
            <person name="Sgroi D."/>
            <person name="Nocks A."/>
            <person name="Stamenkovic I."/>
        </authorList>
    </citation>
    <scope>GLYCOSYLATION AT ASN-100</scope>
    <scope>MUTAGENESIS OF ASN-100</scope>
</reference>
<reference key="10">
    <citation type="journal article" date="1999" name="Eur. J. Immunol.">
        <title>The sialoadhesin CD33 is a myeloid-specific inhibitory receptor.</title>
        <authorList>
            <person name="Ulyanova T."/>
            <person name="Blasioli J."/>
            <person name="Woodford-Thomas T.A."/>
            <person name="Thomas M.L."/>
        </authorList>
    </citation>
    <scope>FUNCTION</scope>
    <scope>PHOSPHORYLATION AT TYR-340 AND TYR-358</scope>
    <scope>MUTAGENESIS OF TYR-358</scope>
    <scope>INTERACTION WITH PTPN6</scope>
</reference>
<reference key="11">
    <citation type="journal article" date="1999" name="J. Biol. Chem.">
        <title>The myeloid-specific sialic acid-binding receptor, CD33, associates with the protein-tyrosine phosphatases, SHP-1 and SHP-2.</title>
        <authorList>
            <person name="Taylor V.C."/>
            <person name="Buckley C.D."/>
            <person name="Douglas M."/>
            <person name="Cody A.J."/>
            <person name="Simmons D.L."/>
            <person name="Freeman S.D."/>
        </authorList>
    </citation>
    <scope>PHOSPHORYLATION AT TYR-340 AND TYR-358</scope>
    <scope>INTERACTION WITH PTPN6 AND PTPN11</scope>
    <scope>MUTAGENESIS OF TYR-340</scope>
</reference>
<reference key="12">
    <citation type="journal article" date="1999" name="Proc. Natl. Acad. Sci. U.S.A.">
        <title>Engagement of p75/AIRM1 or CD33 inhibits the proliferation of normal or leukemic myeloid cells.</title>
        <authorList>
            <person name="Vitale C."/>
            <person name="Romagnani C."/>
            <person name="Falco M."/>
            <person name="Ponte M."/>
            <person name="Vitale M."/>
            <person name="Moretta A."/>
            <person name="Bacigalupo A."/>
            <person name="Moretta L."/>
            <person name="Mingari M.C."/>
        </authorList>
    </citation>
    <scope>FUNCTION</scope>
    <scope>SUBCELLULAR LOCATION</scope>
</reference>
<reference key="13">
    <citation type="journal article" date="2000" name="Blood">
        <title>Myeloid specific human CD33 is an inhibitory receptor with differential ITIM function in recruiting the phosphatases SHP-1 and SHP-2.</title>
        <authorList>
            <person name="Paul S.P."/>
            <person name="Taylor L.S."/>
            <person name="Stansbury E.K."/>
            <person name="McVicar D.W."/>
        </authorList>
    </citation>
    <scope>FUNCTION</scope>
    <scope>PHOSPHORYLATION AT TYR-340 AND TYR-358</scope>
    <scope>MUTAGENESIS OF TYR-340 AND TYR-358</scope>
    <scope>SUBUNIT</scope>
</reference>
<reference key="14">
    <citation type="journal article" date="2001" name="Proc. Natl. Acad. Sci. U.S.A.">
        <title>Surface expression and function of p75/AIRM-1 or CD33 in acute myeloid leukemias: engagement of CD33 induces apoptosis of leukemic cells.</title>
        <authorList>
            <person name="Vitale C."/>
            <person name="Romagnani C."/>
            <person name="Puccetti A."/>
            <person name="Olive D."/>
            <person name="Costello R."/>
            <person name="Chiossone L."/>
            <person name="Pitto A."/>
            <person name="Bacigalupo A."/>
            <person name="Moretta L."/>
            <person name="Mingari M.C."/>
        </authorList>
    </citation>
    <scope>FUNCTION</scope>
</reference>
<reference key="15">
    <citation type="journal article" date="2005" name="Eur. J. Immunol.">
        <title>Constitutive repressor activity of CD33 on human monocytes requires sialic acid recognition and phosphoinositide 3-kinase-mediated intracellular signaling.</title>
        <authorList>
            <person name="Lajaunias F."/>
            <person name="Dayer J.M."/>
            <person name="Chizzolini C."/>
        </authorList>
    </citation>
    <scope>FUNCTION</scope>
</reference>
<reference key="16">
    <citation type="journal article" date="2017" name="Sci. Rep.">
        <title>Evidence for C1q-mediated crosslinking of CD33/LAIR-1 inhibitory immunoreceptors and biological control of CD33/LAIR-1 expression.</title>
        <authorList>
            <person name="Son M."/>
            <person name="Diamond B."/>
            <person name="Volpe B.T."/>
            <person name="Aranow C.B."/>
            <person name="Mackay M.C."/>
            <person name="Santiago-Schwarz F."/>
        </authorList>
    </citation>
    <scope>FUNCTION</scope>
    <scope>INTERACTION WITH C1QA</scope>
</reference>
<reference key="17">
    <citation type="journal article" date="2017" name="J. Biol. Chem.">
        <title>The Alzheimer's disease-protective CD33 splice variant mediates adaptive loss of function via diversion to an intracellular pool.</title>
        <authorList>
            <person name="Siddiqui S.S."/>
            <person name="Springer S.A."/>
            <person name="Verhagen A."/>
            <person name="Sundaramurthy V."/>
            <person name="Alisson-Silva F."/>
            <person name="Jiang W."/>
            <person name="Ghosh P."/>
            <person name="Varki A."/>
        </authorList>
    </citation>
    <scope>SUBCELLULAR LOCATION</scope>
</reference>
<reference key="18">
    <citation type="submission" date="2016-03" db="PDB data bank">
        <title>Structure of ligand bound CD33 receptor associated with Alzheimer's disease.</title>
        <authorList>
            <person name="Dodd R.B."/>
            <person name="Meadows W."/>
            <person name="Qamar S."/>
            <person name="Johnson C.M."/>
            <person name="Kronenberg-Versteeg D."/>
            <person name="St George-Hyslop P."/>
        </authorList>
    </citation>
    <scope>X-RAY CRYSTALLOGRAPHY (2.48 ANGSTROMS) OF 21-232 IN COMPLEX WITH GALACTOSE</scope>
    <scope>GLYCOSYLATION AT ASN-100; ASN-160; ASN-209 AND ASN-230</scope>
    <scope>DISULFIDE BONDS</scope>
</reference>
<accession>P20138</accession>
<accession>B4E3P8</accession>
<accession>C9JEN7</accession>
<accession>F8WAL2</accession>
<accession>Q8TD24</accession>
<protein>
    <recommendedName>
        <fullName>Myeloid cell surface antigen CD33</fullName>
    </recommendedName>
    <alternativeName>
        <fullName>Sialic acid-binding Ig-like lectin 3</fullName>
        <shortName>Siglec-3</shortName>
    </alternativeName>
    <alternativeName>
        <fullName>gp67</fullName>
    </alternativeName>
    <cdAntigenName>CD33</cdAntigenName>
</protein>
<evidence type="ECO:0000250" key="1"/>
<evidence type="ECO:0000255" key="2"/>
<evidence type="ECO:0000256" key="3">
    <source>
        <dbReference type="SAM" id="MobiDB-lite"/>
    </source>
</evidence>
<evidence type="ECO:0000269" key="4">
    <source>
    </source>
</evidence>
<evidence type="ECO:0000269" key="5">
    <source>
    </source>
</evidence>
<evidence type="ECO:0000269" key="6">
    <source>
    </source>
</evidence>
<evidence type="ECO:0000269" key="7">
    <source>
    </source>
</evidence>
<evidence type="ECO:0000269" key="8">
    <source>
    </source>
</evidence>
<evidence type="ECO:0000269" key="9">
    <source>
    </source>
</evidence>
<evidence type="ECO:0000269" key="10">
    <source>
    </source>
</evidence>
<evidence type="ECO:0000269" key="11">
    <source>
    </source>
</evidence>
<evidence type="ECO:0000269" key="12">
    <source>
    </source>
</evidence>
<evidence type="ECO:0000269" key="13">
    <source>
    </source>
</evidence>
<evidence type="ECO:0000269" key="14">
    <source>
    </source>
</evidence>
<evidence type="ECO:0000269" key="15">
    <source>
    </source>
</evidence>
<evidence type="ECO:0000269" key="16">
    <source>
    </source>
</evidence>
<evidence type="ECO:0000269" key="17">
    <source ref="18"/>
</evidence>
<evidence type="ECO:0000303" key="18">
    <source>
    </source>
</evidence>
<evidence type="ECO:0000303" key="19">
    <source>
    </source>
</evidence>
<evidence type="ECO:0000305" key="20"/>
<evidence type="ECO:0007744" key="21">
    <source>
        <dbReference type="PDB" id="5IHB"/>
    </source>
</evidence>
<evidence type="ECO:0007744" key="22">
    <source>
        <dbReference type="PDB" id="5J06"/>
    </source>
</evidence>
<evidence type="ECO:0007744" key="23">
    <source>
        <dbReference type="PDB" id="5J0B"/>
    </source>
</evidence>
<evidence type="ECO:0007829" key="24">
    <source>
        <dbReference type="PDB" id="5IHB"/>
    </source>
</evidence>
<evidence type="ECO:0007829" key="25">
    <source>
        <dbReference type="PDB" id="6D4A"/>
    </source>
</evidence>
<evidence type="ECO:0007829" key="26">
    <source>
        <dbReference type="PDB" id="7AW6"/>
    </source>
</evidence>
<organism>
    <name type="scientific">Homo sapiens</name>
    <name type="common">Human</name>
    <dbReference type="NCBI Taxonomy" id="9606"/>
    <lineage>
        <taxon>Eukaryota</taxon>
        <taxon>Metazoa</taxon>
        <taxon>Chordata</taxon>
        <taxon>Craniata</taxon>
        <taxon>Vertebrata</taxon>
        <taxon>Euteleostomi</taxon>
        <taxon>Mammalia</taxon>
        <taxon>Eutheria</taxon>
        <taxon>Euarchontoglires</taxon>
        <taxon>Primates</taxon>
        <taxon>Haplorrhini</taxon>
        <taxon>Catarrhini</taxon>
        <taxon>Hominidae</taxon>
        <taxon>Homo</taxon>
    </lineage>
</organism>
<dbReference type="EMBL" id="M23197">
    <property type="protein sequence ID" value="AAA51948.1"/>
    <property type="status" value="ALT_SEQ"/>
    <property type="molecule type" value="mRNA"/>
</dbReference>
<dbReference type="EMBL" id="AY040541">
    <property type="protein sequence ID" value="AAK83654.1"/>
    <property type="molecule type" value="Genomic_DNA"/>
</dbReference>
<dbReference type="EMBL" id="AY162464">
    <property type="status" value="NOT_ANNOTATED_CDS"/>
    <property type="molecule type" value="mRNA"/>
</dbReference>
<dbReference type="EMBL" id="AK304810">
    <property type="protein sequence ID" value="BAG65560.1"/>
    <property type="molecule type" value="mRNA"/>
</dbReference>
<dbReference type="EMBL" id="AC063977">
    <property type="status" value="NOT_ANNOTATED_CDS"/>
    <property type="molecule type" value="Genomic_DNA"/>
</dbReference>
<dbReference type="EMBL" id="CH471135">
    <property type="protein sequence ID" value="EAW71996.1"/>
    <property type="molecule type" value="Genomic_DNA"/>
</dbReference>
<dbReference type="EMBL" id="BC028152">
    <property type="protein sequence ID" value="AAH28152.1"/>
    <property type="molecule type" value="mRNA"/>
</dbReference>
<dbReference type="CCDS" id="CCDS33084.1">
    <molecule id="P20138-1"/>
</dbReference>
<dbReference type="CCDS" id="CCDS46157.1">
    <molecule id="P20138-3"/>
</dbReference>
<dbReference type="CCDS" id="CCDS54299.1">
    <molecule id="P20138-2"/>
</dbReference>
<dbReference type="PIR" id="A30521">
    <property type="entry name" value="A30521"/>
</dbReference>
<dbReference type="RefSeq" id="NP_001076087.1">
    <molecule id="P20138-3"/>
    <property type="nucleotide sequence ID" value="NM_001082618.2"/>
</dbReference>
<dbReference type="RefSeq" id="NP_001171079.1">
    <molecule id="P20138-2"/>
    <property type="nucleotide sequence ID" value="NM_001177608.2"/>
</dbReference>
<dbReference type="RefSeq" id="NP_001763.3">
    <molecule id="P20138-1"/>
    <property type="nucleotide sequence ID" value="NM_001772.4"/>
</dbReference>
<dbReference type="RefSeq" id="XP_011525834.1">
    <molecule id="P20138-1"/>
    <property type="nucleotide sequence ID" value="XM_011527532.3"/>
</dbReference>
<dbReference type="PDB" id="5IHB">
    <property type="method" value="X-ray"/>
    <property type="resolution" value="2.24 A"/>
    <property type="chains" value="A/B/C/D=21-232"/>
</dbReference>
<dbReference type="PDB" id="5J06">
    <property type="method" value="X-ray"/>
    <property type="resolution" value="2.66 A"/>
    <property type="chains" value="A/B/C/D=21-232"/>
</dbReference>
<dbReference type="PDB" id="5J0B">
    <property type="method" value="X-ray"/>
    <property type="resolution" value="2.48 A"/>
    <property type="chains" value="A/B/C/D=21-232"/>
</dbReference>
<dbReference type="PDB" id="6D48">
    <property type="method" value="X-ray"/>
    <property type="resolution" value="1.78 A"/>
    <property type="chains" value="E/F/G/H=18-143"/>
</dbReference>
<dbReference type="PDB" id="6D49">
    <property type="method" value="X-ray"/>
    <property type="resolution" value="1.80 A"/>
    <property type="chains" value="A/B=18-143"/>
</dbReference>
<dbReference type="PDB" id="6D4A">
    <property type="method" value="X-ray"/>
    <property type="resolution" value="1.75 A"/>
    <property type="chains" value="A/B=18-143"/>
</dbReference>
<dbReference type="PDB" id="6TL8">
    <property type="method" value="X-ray"/>
    <property type="resolution" value="2.80 A"/>
    <property type="chains" value="A/B/C/D=1-16"/>
</dbReference>
<dbReference type="PDB" id="7AW6">
    <property type="method" value="X-ray"/>
    <property type="resolution" value="1.95 A"/>
    <property type="chains" value="A/B=21-232"/>
</dbReference>
<dbReference type="PDBsum" id="5IHB"/>
<dbReference type="PDBsum" id="5J06"/>
<dbReference type="PDBsum" id="5J0B"/>
<dbReference type="PDBsum" id="6D48"/>
<dbReference type="PDBsum" id="6D49"/>
<dbReference type="PDBsum" id="6D4A"/>
<dbReference type="PDBsum" id="6TL8"/>
<dbReference type="PDBsum" id="7AW6"/>
<dbReference type="SMR" id="P20138"/>
<dbReference type="BioGRID" id="107383">
    <property type="interactions" value="48"/>
</dbReference>
<dbReference type="FunCoup" id="P20138">
    <property type="interactions" value="411"/>
</dbReference>
<dbReference type="IntAct" id="P20138">
    <property type="interactions" value="34"/>
</dbReference>
<dbReference type="MINT" id="P20138"/>
<dbReference type="STRING" id="9606.ENSP00000262262"/>
<dbReference type="ChEMBL" id="CHEMBL1842"/>
<dbReference type="DrugBank" id="DB06318">
    <property type="generic name" value="AVE9633"/>
</dbReference>
<dbReference type="DrugBank" id="DB00056">
    <property type="generic name" value="Gemtuzumab ozogamicin"/>
</dbReference>
<dbReference type="DrugBank" id="DB11884">
    <property type="generic name" value="Vadastuximab talirine"/>
</dbReference>
<dbReference type="DrugCentral" id="P20138"/>
<dbReference type="GuidetoPHARMACOLOGY" id="2601"/>
<dbReference type="UniLectin" id="P20138"/>
<dbReference type="GlyCosmos" id="P20138">
    <property type="glycosylation" value="7 sites, 1 glycan"/>
</dbReference>
<dbReference type="GlyGen" id="P20138">
    <property type="glycosylation" value="10 sites, 1 N-linked glycan (1 site), 3 O-linked glycans (3 sites)"/>
</dbReference>
<dbReference type="iPTMnet" id="P20138"/>
<dbReference type="PhosphoSitePlus" id="P20138"/>
<dbReference type="BioMuta" id="CD33"/>
<dbReference type="DMDM" id="116241290"/>
<dbReference type="CPTAC" id="CPTAC-5951"/>
<dbReference type="jPOST" id="P20138"/>
<dbReference type="MassIVE" id="P20138"/>
<dbReference type="PaxDb" id="9606-ENSP00000262262"/>
<dbReference type="PeptideAtlas" id="P20138"/>
<dbReference type="ProteomicsDB" id="30518"/>
<dbReference type="ProteomicsDB" id="53725">
    <molecule id="P20138-1"/>
</dbReference>
<dbReference type="ProteomicsDB" id="9878"/>
<dbReference type="ABCD" id="P20138">
    <property type="antibodies" value="5 sequenced antibodies"/>
</dbReference>
<dbReference type="Antibodypedia" id="4419">
    <property type="antibodies" value="3389 antibodies from 51 providers"/>
</dbReference>
<dbReference type="CPTC" id="P20138">
    <property type="antibodies" value="5 antibodies"/>
</dbReference>
<dbReference type="DNASU" id="945"/>
<dbReference type="Ensembl" id="ENST00000262262.5">
    <molecule id="P20138-1"/>
    <property type="protein sequence ID" value="ENSP00000262262.3"/>
    <property type="gene ID" value="ENSG00000105383.15"/>
</dbReference>
<dbReference type="Ensembl" id="ENST00000391796.7">
    <molecule id="P20138-2"/>
    <property type="protein sequence ID" value="ENSP00000375673.2"/>
    <property type="gene ID" value="ENSG00000105383.15"/>
</dbReference>
<dbReference type="Ensembl" id="ENST00000421133.6">
    <molecule id="P20138-3"/>
    <property type="protein sequence ID" value="ENSP00000410126.1"/>
    <property type="gene ID" value="ENSG00000105383.15"/>
</dbReference>
<dbReference type="GeneID" id="945"/>
<dbReference type="KEGG" id="hsa:945"/>
<dbReference type="MANE-Select" id="ENST00000262262.5">
    <property type="protein sequence ID" value="ENSP00000262262.3"/>
    <property type="RefSeq nucleotide sequence ID" value="NM_001772.4"/>
    <property type="RefSeq protein sequence ID" value="NP_001763.3"/>
</dbReference>
<dbReference type="UCSC" id="uc010eos.2">
    <molecule id="P20138-1"/>
    <property type="organism name" value="human"/>
</dbReference>
<dbReference type="AGR" id="HGNC:1659"/>
<dbReference type="CTD" id="945"/>
<dbReference type="DisGeNET" id="945"/>
<dbReference type="GeneCards" id="CD33"/>
<dbReference type="HGNC" id="HGNC:1659">
    <property type="gene designation" value="CD33"/>
</dbReference>
<dbReference type="HPA" id="ENSG00000105383">
    <property type="expression patterns" value="Tissue enhanced (bone marrow, lymphoid tissue)"/>
</dbReference>
<dbReference type="MalaCards" id="CD33"/>
<dbReference type="MIM" id="159590">
    <property type="type" value="gene"/>
</dbReference>
<dbReference type="neXtProt" id="NX_P20138"/>
<dbReference type="OpenTargets" id="ENSG00000105383"/>
<dbReference type="PharmGKB" id="PA26210"/>
<dbReference type="VEuPathDB" id="HostDB:ENSG00000105383"/>
<dbReference type="eggNOG" id="ENOG502S41V">
    <property type="taxonomic scope" value="Eukaryota"/>
</dbReference>
<dbReference type="GeneTree" id="ENSGT01080000257333"/>
<dbReference type="HOGENOM" id="CLU_102212_0_0_1"/>
<dbReference type="InParanoid" id="P20138"/>
<dbReference type="OMA" id="ILWAVEW"/>
<dbReference type="OrthoDB" id="5843397at2759"/>
<dbReference type="PAN-GO" id="P20138">
    <property type="GO annotations" value="3 GO annotations based on evolutionary models"/>
</dbReference>
<dbReference type="PhylomeDB" id="P20138"/>
<dbReference type="TreeFam" id="TF332441"/>
<dbReference type="PathwayCommons" id="P20138"/>
<dbReference type="Reactome" id="R-HSA-198933">
    <property type="pathway name" value="Immunoregulatory interactions between a Lymphoid and a non-Lymphoid cell"/>
</dbReference>
<dbReference type="Reactome" id="R-HSA-6798695">
    <property type="pathway name" value="Neutrophil degranulation"/>
</dbReference>
<dbReference type="SignaLink" id="P20138"/>
<dbReference type="SIGNOR" id="P20138"/>
<dbReference type="BioGRID-ORCS" id="945">
    <property type="hits" value="10 hits in 1163 CRISPR screens"/>
</dbReference>
<dbReference type="ChiTaRS" id="CD33">
    <property type="organism name" value="human"/>
</dbReference>
<dbReference type="GenomeRNAi" id="945"/>
<dbReference type="Pharos" id="P20138">
    <property type="development level" value="Tclin"/>
</dbReference>
<dbReference type="PRO" id="PR:P20138"/>
<dbReference type="Proteomes" id="UP000005640">
    <property type="component" value="Chromosome 19"/>
</dbReference>
<dbReference type="RNAct" id="P20138">
    <property type="molecule type" value="protein"/>
</dbReference>
<dbReference type="Bgee" id="ENSG00000105383">
    <property type="expression patterns" value="Expressed in monocyte and 116 other cell types or tissues"/>
</dbReference>
<dbReference type="ExpressionAtlas" id="P20138">
    <property type="expression patterns" value="baseline and differential"/>
</dbReference>
<dbReference type="GO" id="GO:0009986">
    <property type="term" value="C:cell surface"/>
    <property type="evidence" value="ECO:0000314"/>
    <property type="project" value="UniProtKB"/>
</dbReference>
<dbReference type="GO" id="GO:0009897">
    <property type="term" value="C:external side of plasma membrane"/>
    <property type="evidence" value="ECO:0000314"/>
    <property type="project" value="MGI"/>
</dbReference>
<dbReference type="GO" id="GO:0005794">
    <property type="term" value="C:Golgi apparatus"/>
    <property type="evidence" value="ECO:0000314"/>
    <property type="project" value="ARUK-UCL"/>
</dbReference>
<dbReference type="GO" id="GO:0005777">
    <property type="term" value="C:peroxisome"/>
    <property type="evidence" value="ECO:0000314"/>
    <property type="project" value="UniProtKB"/>
</dbReference>
<dbReference type="GO" id="GO:0005886">
    <property type="term" value="C:plasma membrane"/>
    <property type="evidence" value="ECO:0000314"/>
    <property type="project" value="ARUK-UCL"/>
</dbReference>
<dbReference type="GO" id="GO:0035579">
    <property type="term" value="C:specific granule membrane"/>
    <property type="evidence" value="ECO:0000304"/>
    <property type="project" value="Reactome"/>
</dbReference>
<dbReference type="GO" id="GO:0070821">
    <property type="term" value="C:tertiary granule membrane"/>
    <property type="evidence" value="ECO:0000304"/>
    <property type="project" value="Reactome"/>
</dbReference>
<dbReference type="GO" id="GO:0030246">
    <property type="term" value="F:carbohydrate binding"/>
    <property type="evidence" value="ECO:0007669"/>
    <property type="project" value="UniProtKB-KW"/>
</dbReference>
<dbReference type="GO" id="GO:0019903">
    <property type="term" value="F:protein phosphatase binding"/>
    <property type="evidence" value="ECO:0000353"/>
    <property type="project" value="UniProtKB"/>
</dbReference>
<dbReference type="GO" id="GO:0008160">
    <property type="term" value="F:protein tyrosine phosphatase activator activity"/>
    <property type="evidence" value="ECO:0000315"/>
    <property type="project" value="ARUK-UCL"/>
</dbReference>
<dbReference type="GO" id="GO:0033691">
    <property type="term" value="F:sialic acid binding"/>
    <property type="evidence" value="ECO:0000315"/>
    <property type="project" value="ARUK-UCL"/>
</dbReference>
<dbReference type="GO" id="GO:0038023">
    <property type="term" value="F:signaling receptor activity"/>
    <property type="evidence" value="ECO:0000304"/>
    <property type="project" value="ProtInc"/>
</dbReference>
<dbReference type="GO" id="GO:0007155">
    <property type="term" value="P:cell adhesion"/>
    <property type="evidence" value="ECO:0000318"/>
    <property type="project" value="GO_Central"/>
</dbReference>
<dbReference type="GO" id="GO:0098609">
    <property type="term" value="P:cell-cell adhesion"/>
    <property type="evidence" value="ECO:0000315"/>
    <property type="project" value="ARUK-UCL"/>
</dbReference>
<dbReference type="GO" id="GO:0007267">
    <property type="term" value="P:cell-cell signaling"/>
    <property type="evidence" value="ECO:0000304"/>
    <property type="project" value="ProtInc"/>
</dbReference>
<dbReference type="GO" id="GO:0038094">
    <property type="term" value="P:Fc-gamma receptor signaling pathway"/>
    <property type="evidence" value="ECO:0000314"/>
    <property type="project" value="ARUK-UCL"/>
</dbReference>
<dbReference type="GO" id="GO:0002765">
    <property type="term" value="P:immune response-inhibiting signal transduction"/>
    <property type="evidence" value="ECO:0000314"/>
    <property type="project" value="UniProtKB"/>
</dbReference>
<dbReference type="GO" id="GO:0008285">
    <property type="term" value="P:negative regulation of cell population proliferation"/>
    <property type="evidence" value="ECO:0000304"/>
    <property type="project" value="ProtInc"/>
</dbReference>
<dbReference type="GO" id="GO:0032691">
    <property type="term" value="P:negative regulation of interleukin-1 beta production"/>
    <property type="evidence" value="ECO:0000315"/>
    <property type="project" value="ARUK-UCL"/>
</dbReference>
<dbReference type="GO" id="GO:0032717">
    <property type="term" value="P:negative regulation of interleukin-8 production"/>
    <property type="evidence" value="ECO:0000315"/>
    <property type="project" value="ARUK-UCL"/>
</dbReference>
<dbReference type="GO" id="GO:0150102">
    <property type="term" value="P:negative regulation of monocyte activation"/>
    <property type="evidence" value="ECO:0000314"/>
    <property type="project" value="ARUK-UCL"/>
</dbReference>
<dbReference type="GO" id="GO:0032720">
    <property type="term" value="P:negative regulation of tumor necrosis factor production"/>
    <property type="evidence" value="ECO:0000315"/>
    <property type="project" value="ARUK-UCL"/>
</dbReference>
<dbReference type="GO" id="GO:0050714">
    <property type="term" value="P:positive regulation of protein secretion"/>
    <property type="evidence" value="ECO:0000315"/>
    <property type="project" value="UniProtKB"/>
</dbReference>
<dbReference type="GO" id="GO:0007165">
    <property type="term" value="P:signal transduction"/>
    <property type="evidence" value="ECO:0000304"/>
    <property type="project" value="ProtInc"/>
</dbReference>
<dbReference type="CDD" id="cd20987">
    <property type="entry name" value="IgC2_CD33_d2_like"/>
    <property type="match status" value="1"/>
</dbReference>
<dbReference type="CDD" id="cd05712">
    <property type="entry name" value="IgV_CD33"/>
    <property type="match status" value="1"/>
</dbReference>
<dbReference type="FunFam" id="2.60.40.10:FF:000912">
    <property type="entry name" value="Myeloid cell surface antigen CD33"/>
    <property type="match status" value="1"/>
</dbReference>
<dbReference type="FunFam" id="2.60.40.10:FF:000829">
    <property type="entry name" value="Sialic acid-binding Ig-like lectin 8"/>
    <property type="match status" value="1"/>
</dbReference>
<dbReference type="Gene3D" id="2.60.40.10">
    <property type="entry name" value="Immunoglobulins"/>
    <property type="match status" value="2"/>
</dbReference>
<dbReference type="InterPro" id="IPR007110">
    <property type="entry name" value="Ig-like_dom"/>
</dbReference>
<dbReference type="InterPro" id="IPR036179">
    <property type="entry name" value="Ig-like_dom_sf"/>
</dbReference>
<dbReference type="InterPro" id="IPR013783">
    <property type="entry name" value="Ig-like_fold"/>
</dbReference>
<dbReference type="InterPro" id="IPR003599">
    <property type="entry name" value="Ig_sub"/>
</dbReference>
<dbReference type="InterPro" id="IPR013106">
    <property type="entry name" value="Ig_V-set"/>
</dbReference>
<dbReference type="InterPro" id="IPR013151">
    <property type="entry name" value="Immunoglobulin_dom"/>
</dbReference>
<dbReference type="InterPro" id="IPR051036">
    <property type="entry name" value="SIGLEC"/>
</dbReference>
<dbReference type="PANTHER" id="PTHR12035:SF132">
    <property type="entry name" value="MYELOID CELL SURFACE ANTIGEN CD33"/>
    <property type="match status" value="1"/>
</dbReference>
<dbReference type="PANTHER" id="PTHR12035">
    <property type="entry name" value="SIALIC ACID BINDING IMMUNOGLOBULIN-LIKE LECTIN"/>
    <property type="match status" value="1"/>
</dbReference>
<dbReference type="Pfam" id="PF00047">
    <property type="entry name" value="ig"/>
    <property type="match status" value="1"/>
</dbReference>
<dbReference type="Pfam" id="PF07686">
    <property type="entry name" value="V-set"/>
    <property type="match status" value="1"/>
</dbReference>
<dbReference type="SMART" id="SM00409">
    <property type="entry name" value="IG"/>
    <property type="match status" value="2"/>
</dbReference>
<dbReference type="SUPFAM" id="SSF48726">
    <property type="entry name" value="Immunoglobulin"/>
    <property type="match status" value="2"/>
</dbReference>
<dbReference type="PROSITE" id="PS50835">
    <property type="entry name" value="IG_LIKE"/>
    <property type="match status" value="2"/>
</dbReference>
<keyword id="KW-0002">3D-structure</keyword>
<keyword id="KW-0025">Alternative splicing</keyword>
<keyword id="KW-0130">Cell adhesion</keyword>
<keyword id="KW-1003">Cell membrane</keyword>
<keyword id="KW-1015">Disulfide bond</keyword>
<keyword id="KW-0325">Glycoprotein</keyword>
<keyword id="KW-0393">Immunoglobulin domain</keyword>
<keyword id="KW-0430">Lectin</keyword>
<keyword id="KW-0472">Membrane</keyword>
<keyword id="KW-0576">Peroxisome</keyword>
<keyword id="KW-0597">Phosphoprotein</keyword>
<keyword id="KW-1267">Proteomics identification</keyword>
<keyword id="KW-1185">Reference proteome</keyword>
<keyword id="KW-0677">Repeat</keyword>
<keyword id="KW-0732">Signal</keyword>
<keyword id="KW-0812">Transmembrane</keyword>
<keyword id="KW-1133">Transmembrane helix</keyword>
<name>CD33_HUMAN</name>
<proteinExistence type="evidence at protein level"/>
<feature type="signal peptide" evidence="2">
    <location>
        <begin position="1"/>
        <end position="17"/>
    </location>
</feature>
<feature type="chain" id="PRO_0000014878" description="Myeloid cell surface antigen CD33">
    <location>
        <begin position="18"/>
        <end position="364"/>
    </location>
</feature>
<feature type="topological domain" description="Extracellular" evidence="2">
    <location>
        <begin position="18"/>
        <end position="259"/>
    </location>
</feature>
<feature type="transmembrane region" description="Helical" evidence="2">
    <location>
        <begin position="260"/>
        <end position="282"/>
    </location>
</feature>
<feature type="topological domain" description="Cytoplasmic" evidence="2">
    <location>
        <begin position="283"/>
        <end position="364"/>
    </location>
</feature>
<feature type="domain" description="Ig-like V-type">
    <location>
        <begin position="19"/>
        <end position="135"/>
    </location>
</feature>
<feature type="domain" description="Ig-like C2-type">
    <location>
        <begin position="145"/>
        <end position="228"/>
    </location>
</feature>
<feature type="region of interest" description="Disordered" evidence="3">
    <location>
        <begin position="290"/>
        <end position="364"/>
    </location>
</feature>
<feature type="short sequence motif" description="ITIM motif 1">
    <location>
        <begin position="338"/>
        <end position="343"/>
    </location>
</feature>
<feature type="short sequence motif" description="ITIM motif 2">
    <location>
        <begin position="356"/>
        <end position="361"/>
    </location>
</feature>
<feature type="binding site" evidence="1">
    <location>
        <position position="119"/>
    </location>
    <ligand>
        <name>N-acetylneuraminate</name>
        <dbReference type="ChEBI" id="CHEBI:35418"/>
    </ligand>
</feature>
<feature type="binding site" evidence="23">
    <location>
        <position position="154"/>
    </location>
    <ligand>
        <name>D-galactose</name>
        <dbReference type="ChEBI" id="CHEBI:4139"/>
    </ligand>
</feature>
<feature type="modified residue" description="Phosphotyrosine; by LCK" evidence="4 5 7">
    <location>
        <position position="340"/>
    </location>
</feature>
<feature type="modified residue" description="Phosphotyrosine; by LCK" evidence="4 5 7">
    <location>
        <position position="358"/>
    </location>
</feature>
<feature type="glycosylation site" description="N-linked (GlcNAc...) asparagine" evidence="16 21 22 23">
    <location>
        <position position="100"/>
    </location>
</feature>
<feature type="glycosylation site" description="N-linked (GlcNAc...) asparagine" evidence="2">
    <location>
        <position position="113"/>
    </location>
</feature>
<feature type="glycosylation site" description="N-linked (GlcNAc...) asparagine" evidence="21 22 23">
    <location>
        <position position="160"/>
    </location>
</feature>
<feature type="glycosylation site" description="N-linked (GlcNAc...) asparagine" evidence="21 22 23">
    <location>
        <position position="209"/>
    </location>
</feature>
<feature type="glycosylation site" description="N-linked (GlcNAc...) asparagine" evidence="22">
    <location>
        <position position="230"/>
    </location>
</feature>
<feature type="disulfide bond" evidence="17">
    <location>
        <begin position="36"/>
        <end position="169"/>
    </location>
</feature>
<feature type="disulfide bond" evidence="17">
    <location>
        <begin position="41"/>
        <end position="101"/>
    </location>
</feature>
<feature type="disulfide bond" evidence="17">
    <location>
        <begin position="163"/>
        <end position="212"/>
    </location>
</feature>
<feature type="splice variant" id="VSP_046172" description="In isoform CD33m." evidence="19">
    <location>
        <begin position="13"/>
        <end position="139"/>
    </location>
</feature>
<feature type="splice variant" id="VSP_045364" description="In isoform 3." evidence="18">
    <original>KHQKKSKLHGPTETSSCSGAAPTVEMDEELHYASLNFHGMNPSKDTSTEYSEVRTQ</original>
    <variation>VR</variation>
    <location>
        <begin position="309"/>
        <end position="364"/>
    </location>
</feature>
<feature type="sequence variant" id="VAR_049904" description="In dbSNP:rs12459419." evidence="9">
    <original>A</original>
    <variation>V</variation>
    <location>
        <position position="14"/>
    </location>
</feature>
<feature type="sequence variant" id="VAR_049905" description="In dbSNP:rs35814802.">
    <original>W</original>
    <variation>R</variation>
    <location>
        <position position="22"/>
    </location>
</feature>
<feature type="sequence variant" id="VAR_028260" description="In dbSNP:rs2455069." evidence="10 14">
    <original>R</original>
    <variation>G</variation>
    <location>
        <position position="69"/>
    </location>
</feature>
<feature type="sequence variant" id="VAR_049906" description="In dbSNP:rs34919259.">
    <original>S</original>
    <variation>N</variation>
    <location>
        <position position="128"/>
    </location>
</feature>
<feature type="sequence variant" id="VAR_028261" description="In dbSNP:rs4082929.">
    <original>R</original>
    <variation>W</variation>
    <location>
        <position position="202"/>
    </location>
</feature>
<feature type="sequence variant" id="VAR_028262" description="In dbSNP:rs988337.">
    <original>I</original>
    <variation>L</variation>
    <location>
        <position position="242"/>
    </location>
</feature>
<feature type="sequence variant" id="VAR_028263" description="In dbSNP:rs11882250.">
    <original>F</original>
    <variation>L</variation>
    <location>
        <position position="243"/>
    </location>
</feature>
<feature type="sequence variant" id="VAR_061319" description="In dbSNP:rs58981829.">
    <original>V</original>
    <variation>I</variation>
    <location>
        <position position="267"/>
    </location>
</feature>
<feature type="sequence variant" id="VAR_028264" description="In dbSNP:rs2271652.">
    <original>V</original>
    <variation>L</variation>
    <location>
        <position position="294"/>
    </location>
</feature>
<feature type="sequence variant" id="VAR_049907" description="In dbSNP:rs35112940." evidence="9">
    <original>G</original>
    <variation>R</variation>
    <location>
        <position position="304"/>
    </location>
</feature>
<feature type="sequence variant" id="VAR_049908" description="In dbSNP:rs35632246.">
    <original>T</original>
    <variation>A</variation>
    <location>
        <position position="331"/>
    </location>
</feature>
<feature type="mutagenesis site" description="Significant loss of binding to peripheral blood granulocytes." evidence="16">
    <original>N</original>
    <variation>A</variation>
    <location>
        <position position="100"/>
    </location>
</feature>
<feature type="mutagenesis site" description="Abolishes binding to PTPN6 and PTPN11. Increases binding of red blood cells." evidence="4">
    <original>Y</original>
    <variation>A</variation>
    <location>
        <position position="340"/>
    </location>
</feature>
<feature type="mutagenesis site" description="Complete loss of phosphorylation by LCK." evidence="7">
    <original>Y</original>
    <variation>F</variation>
    <location>
        <position position="340"/>
    </location>
</feature>
<feature type="mutagenesis site" description="Reduces binding to PTPN6." evidence="5">
    <original>Y</original>
    <variation>A</variation>
    <variation>F</variation>
    <location>
        <position position="358"/>
    </location>
</feature>
<feature type="mutagenesis site" description="More than 50% loss of phosphorylation by LCK." evidence="7">
    <original>Y</original>
    <variation>F</variation>
    <location>
        <position position="358"/>
    </location>
</feature>
<feature type="strand" evidence="25">
    <location>
        <begin position="22"/>
        <end position="25"/>
    </location>
</feature>
<feature type="strand" evidence="25">
    <location>
        <begin position="27"/>
        <end position="32"/>
    </location>
</feature>
<feature type="strand" evidence="25">
    <location>
        <begin position="37"/>
        <end position="39"/>
    </location>
</feature>
<feature type="strand" evidence="25">
    <location>
        <begin position="41"/>
        <end position="44"/>
    </location>
</feature>
<feature type="helix" evidence="25">
    <location>
        <begin position="49"/>
        <end position="51"/>
    </location>
</feature>
<feature type="strand" evidence="25">
    <location>
        <begin position="56"/>
        <end position="62"/>
    </location>
</feature>
<feature type="turn" evidence="25">
    <location>
        <begin position="67"/>
        <end position="69"/>
    </location>
</feature>
<feature type="strand" evidence="25">
    <location>
        <begin position="73"/>
        <end position="76"/>
    </location>
</feature>
<feature type="turn" evidence="25">
    <location>
        <begin position="84"/>
        <end position="89"/>
    </location>
</feature>
<feature type="strand" evidence="25">
    <location>
        <begin position="90"/>
        <end position="92"/>
    </location>
</feature>
<feature type="helix" evidence="25">
    <location>
        <begin position="96"/>
        <end position="98"/>
    </location>
</feature>
<feature type="strand" evidence="25">
    <location>
        <begin position="103"/>
        <end position="105"/>
    </location>
</feature>
<feature type="helix" evidence="25">
    <location>
        <begin position="110"/>
        <end position="112"/>
    </location>
</feature>
<feature type="strand" evidence="25">
    <location>
        <begin position="114"/>
        <end position="122"/>
    </location>
</feature>
<feature type="strand" evidence="25">
    <location>
        <begin position="125"/>
        <end position="128"/>
    </location>
</feature>
<feature type="strand" evidence="25">
    <location>
        <begin position="134"/>
        <end position="139"/>
    </location>
</feature>
<feature type="strand" evidence="26">
    <location>
        <begin position="146"/>
        <end position="148"/>
    </location>
</feature>
<feature type="strand" evidence="26">
    <location>
        <begin position="159"/>
        <end position="164"/>
    </location>
</feature>
<feature type="strand" evidence="26">
    <location>
        <begin position="176"/>
        <end position="191"/>
    </location>
</feature>
<feature type="strand" evidence="26">
    <location>
        <begin position="194"/>
        <end position="199"/>
    </location>
</feature>
<feature type="helix" evidence="26">
    <location>
        <begin position="203"/>
        <end position="205"/>
    </location>
</feature>
<feature type="strand" evidence="26">
    <location>
        <begin position="209"/>
        <end position="215"/>
    </location>
</feature>
<feature type="strand" evidence="24">
    <location>
        <begin position="217"/>
        <end position="220"/>
    </location>
</feature>
<feature type="strand" evidence="26">
    <location>
        <begin position="222"/>
        <end position="228"/>
    </location>
</feature>
<comment type="function">
    <text evidence="4 5 6 7 8 11 12 15">Sialic-acid-binding immunoglobulin-like lectin (Siglec) that plays a role in mediating cell-cell interactions and in maintaining immune cells in a resting state (PubMed:10611343, PubMed:11320212, PubMed:15597323). Preferentially recognizes and binds alpha-2,3- and more avidly alpha-2,6-linked sialic acid-bearing glycans (PubMed:7718872). Upon engagement of ligands such as C1q or syalylated glycoproteins, two immunoreceptor tyrosine-based inhibitory motifs (ITIMs) located in CD33 cytoplasmic tail are phosphorylated by Src-like kinases such as LCK (PubMed:10887109, PubMed:28325905). These phosphorylations provide docking sites for the recruitment and activation of protein-tyrosine phosphatases PTPN6/SHP-1 and PTPN11/SHP-2 (PubMed:10206955, PubMed:10556798, PubMed:10887109). In turn, these phosphatases regulate downstream pathways through dephosphorylation of signaling molecules (PubMed:10206955, PubMed:10887109). One of the repressive effect of CD33 on monocyte activation requires phosphoinositide 3-kinase/PI3K (PubMed:15597323).</text>
</comment>
<comment type="subunit">
    <text evidence="4 5 7 12">Homodimer; disulfide-linked (PubMed:10887109). Interacts with PTPN6/SHP-1 and PTPN11/SHP-2 upon phosphorylation (PubMed:10206955, PubMed:10556798). Interacts with C1QA (via C-terminus); this interaction activates CD33 inhibitory motifs (PubMed:28325905).</text>
</comment>
<comment type="interaction">
    <interactant intactId="EBI-3906571">
        <id>P20138</id>
    </interactant>
    <interactant intactId="EBI-3922513">
        <id>O95393</id>
        <label>BMP10</label>
    </interactant>
    <organismsDiffer>false</organismsDiffer>
    <experiments>3</experiments>
</comment>
<comment type="interaction">
    <interactant intactId="EBI-3906571">
        <id>P20138</id>
    </interactant>
    <interactant intactId="EBI-3911467">
        <id>Q07325</id>
        <label>CXCL9</label>
    </interactant>
    <organismsDiffer>false</organismsDiffer>
    <experiments>3</experiments>
</comment>
<comment type="interaction">
    <interactant intactId="EBI-3906571">
        <id>P20138</id>
    </interactant>
    <interactant intactId="EBI-1058710">
        <id>O43169</id>
        <label>CYB5B</label>
    </interactant>
    <organismsDiffer>false</organismsDiffer>
    <experiments>3</experiments>
</comment>
<comment type="interaction">
    <interactant intactId="EBI-3906571">
        <id>P20138</id>
    </interactant>
    <interactant intactId="EBI-489887">
        <id>P50402</id>
        <label>EMD</label>
    </interactant>
    <organismsDiffer>false</organismsDiffer>
    <experiments>3</experiments>
</comment>
<comment type="interaction">
    <interactant intactId="EBI-3906571">
        <id>P20138</id>
    </interactant>
    <interactant intactId="EBI-6166686">
        <id>Q96F15</id>
        <label>GIMAP5</label>
    </interactant>
    <organismsDiffer>false</organismsDiffer>
    <experiments>3</experiments>
</comment>
<comment type="interaction">
    <interactant intactId="EBI-3906571">
        <id>P20138</id>
    </interactant>
    <interactant intactId="EBI-948001">
        <id>Q15323</id>
        <label>KRT31</label>
    </interactant>
    <organismsDiffer>false</organismsDiffer>
    <experiments>6</experiments>
</comment>
<comment type="interaction">
    <interactant intactId="EBI-3906571">
        <id>P20138</id>
    </interactant>
    <interactant intactId="EBI-1058674">
        <id>Q92764</id>
        <label>KRT35</label>
    </interactant>
    <organismsDiffer>false</organismsDiffer>
    <experiments>3</experiments>
</comment>
<comment type="interaction">
    <interactant intactId="EBI-3906571">
        <id>P20138</id>
    </interactant>
    <interactant intactId="EBI-10171697">
        <id>Q6A162</id>
        <label>KRT40</label>
    </interactant>
    <organismsDiffer>false</organismsDiffer>
    <experiments>3</experiments>
</comment>
<comment type="interaction">
    <interactant intactId="EBI-3906571">
        <id>P20138</id>
    </interactant>
    <interactant intactId="EBI-297779">
        <id>Q06124</id>
        <label>PTPN11</label>
    </interactant>
    <organismsDiffer>false</organismsDiffer>
    <experiments>5</experiments>
</comment>
<comment type="interaction">
    <interactant intactId="EBI-3906571">
        <id>P20138</id>
    </interactant>
    <interactant intactId="EBI-78260">
        <id>P29350</id>
        <label>PTPN6</label>
    </interactant>
    <organismsDiffer>false</organismsDiffer>
    <experiments>10</experiments>
</comment>
<comment type="interaction">
    <interactant intactId="EBI-3906571">
        <id>P20138</id>
    </interactant>
    <interactant intactId="EBI-1052363">
        <id>Q9NS64</id>
        <label>RPRM</label>
    </interactant>
    <organismsDiffer>false</organismsDiffer>
    <experiments>3</experiments>
</comment>
<comment type="interaction">
    <interactant intactId="EBI-3906571">
        <id>P20138</id>
    </interactant>
    <interactant intactId="EBI-1055001">
        <id>P06702</id>
        <label>S100A9</label>
    </interactant>
    <organismsDiffer>false</organismsDiffer>
    <experiments>5</experiments>
</comment>
<comment type="interaction">
    <interactant intactId="EBI-3906571">
        <id>P20138</id>
    </interactant>
    <interactant intactId="EBI-2684237">
        <id>O00767</id>
        <label>SCD</label>
    </interactant>
    <organismsDiffer>false</organismsDiffer>
    <experiments>3</experiments>
</comment>
<comment type="interaction">
    <interactant intactId="EBI-3906571">
        <id>P20138</id>
    </interactant>
    <interactant intactId="EBI-310962">
        <id>Q9UPZ6</id>
        <label>THSD7A</label>
    </interactant>
    <organismsDiffer>false</organismsDiffer>
    <experiments>3</experiments>
</comment>
<comment type="interaction">
    <interactant intactId="EBI-3906571">
        <id>P20138</id>
    </interactant>
    <interactant intactId="EBI-2820569">
        <id>Q969X1</id>
        <label>TMBIM1</label>
    </interactant>
    <organismsDiffer>false</organismsDiffer>
    <experiments>3</experiments>
</comment>
<comment type="interaction">
    <interactant intactId="EBI-3906571">
        <id>P20138</id>
    </interactant>
    <interactant intactId="EBI-8644968">
        <id>Q9NV29</id>
        <label>TMEM100</label>
    </interactant>
    <organismsDiffer>false</organismsDiffer>
    <experiments>3</experiments>
</comment>
<comment type="interaction">
    <interactant intactId="EBI-3906571">
        <id>P20138</id>
    </interactant>
    <interactant intactId="EBI-12887458">
        <id>Q9BU79</id>
        <label>TMEM243</label>
    </interactant>
    <organismsDiffer>false</organismsDiffer>
    <experiments>3</experiments>
</comment>
<comment type="interaction">
    <interactant intactId="EBI-3906571">
        <id>P20138</id>
    </interactant>
    <interactant intactId="EBI-12003398">
        <id>Q9H2S6-2</id>
        <label>TNMD</label>
    </interactant>
    <organismsDiffer>false</organismsDiffer>
    <experiments>3</experiments>
</comment>
<comment type="interaction">
    <interactant intactId="EBI-3906571">
        <id>P20138</id>
    </interactant>
    <interactant intactId="EBI-10243654">
        <id>Q5BVD1</id>
        <label>TTMP</label>
    </interactant>
    <organismsDiffer>false</organismsDiffer>
    <experiments>3</experiments>
</comment>
<comment type="interaction">
    <interactant intactId="EBI-3906571">
        <id>P20138</id>
    </interactant>
    <interactant intactId="EBI-2819725">
        <id>Q9Y5Z9</id>
        <label>UBIAD1</label>
    </interactant>
    <organismsDiffer>false</organismsDiffer>
    <experiments>3</experiments>
</comment>
<comment type="subcellular location">
    <molecule>Isoform CD33M</molecule>
    <subcellularLocation>
        <location evidence="6 13">Cell membrane</location>
        <topology>Single-pass type I membrane protein</topology>
    </subcellularLocation>
</comment>
<comment type="subcellular location">
    <molecule>Isoform CD33m</molecule>
    <subcellularLocation>
        <location evidence="13">Peroxisome</location>
    </subcellularLocation>
    <text evidence="13">CD33m isoform does not localize to cell surfaces but instead accumulates in peroxisomes.</text>
</comment>
<comment type="alternative products">
    <event type="alternative splicing"/>
    <isoform>
        <id>P20138-1</id>
        <name>CD33M</name>
        <sequence type="displayed"/>
    </isoform>
    <isoform>
        <id>P20138-2</id>
        <name>3</name>
        <sequence type="described" ref="VSP_045364"/>
    </isoform>
    <isoform>
        <id>P20138-3</id>
        <name>CD33m</name>
        <sequence type="described" ref="VSP_046172"/>
    </isoform>
</comment>
<comment type="tissue specificity">
    <text>Monocytic/myeloid lineage cells. In the brain, CD33 is mainly expressed on microglial cells.</text>
</comment>
<comment type="domain">
    <text>Contains 2 copies of a cytoplasmic motif that is referred to as the immunoreceptor tyrosine-based inhibitor motif (ITIM). This motif is involved in modulation of cellular responses. The phosphorylated ITIM motif can bind the SH2 domain of several SH2-containing phosphatases.</text>
</comment>
<comment type="PTM">
    <text evidence="16">Glycosylated. Glycosylation at Asn-100 is critical for regulating ligand recognition.</text>
</comment>
<comment type="PTM">
    <text evidence="4 5 7">Phosphorylation of Tyr-340 is involved in binding to PTPN6 and PTPN11. Phosphorylation of Tyr-358 is involved in binding to PTPN6. LCK phosphorylates Tyr-340 efficiently and Tyr-358 to a lesser extent.</text>
</comment>
<comment type="miscellaneous">
    <molecule>Isoform CD33m</molecule>
    <text evidence="20">Mostly detected on NKL and myeloid cell lines but poorly expressed on B-cell lines and T-lymphocytes.</text>
</comment>
<comment type="similarity">
    <text evidence="20">Belongs to the immunoglobulin superfamily. SIGLEC (sialic acid binding Ig-like lectin) family.</text>
</comment>
<comment type="online information" name="Functional Glycomics Gateway - Glycan Binding">
    <link uri="http://www.functionalglycomics.org/glycomics/GBPServlet?&amp;operationType=view&amp;cbpId=cbp_hum_Itlect_270"/>
    <text>Siglec-3</text>
</comment>